<organism>
    <name type="scientific">Streptomyces ambofaciens</name>
    <dbReference type="NCBI Taxonomy" id="1889"/>
    <lineage>
        <taxon>Bacteria</taxon>
        <taxon>Bacillati</taxon>
        <taxon>Actinomycetota</taxon>
        <taxon>Actinomycetes</taxon>
        <taxon>Kitasatosporales</taxon>
        <taxon>Streptomycetaceae</taxon>
        <taxon>Streptomyces</taxon>
    </lineage>
</organism>
<protein>
    <recommendedName>
        <fullName>Subtilisin inhibitor-like protein 7</fullName>
        <shortName>SIL-7</shortName>
        <shortName>SIL7</shortName>
    </recommendedName>
</protein>
<reference key="1">
    <citation type="journal article" date="1996" name="Biochim. Biophys. Acta">
        <title>New subtilisin-trypsin inhibitors produced by Streptomyces: primary structures and their relationship to other proteinase inhibitors from Streptomyces.</title>
        <authorList>
            <person name="Terabe M."/>
            <person name="Kojima S."/>
            <person name="Taguchi S."/>
            <person name="Momose H."/>
            <person name="Miura K."/>
        </authorList>
    </citation>
    <scope>PROTEIN SEQUENCE</scope>
    <scope>CHARACTERIZATION</scope>
    <source>
        <strain>4204</strain>
    </source>
</reference>
<reference key="2">
    <citation type="journal article" date="1993" name="Biosci. Biotechnol. Biochem.">
        <title>High frequency of SSI-like protease inhibitors among Streptomyces.</title>
        <authorList>
            <person name="Taguchi S."/>
            <person name="Kikuchi H."/>
            <person name="Kojima S."/>
            <person name="Kumagai I."/>
            <person name="Nakase T."/>
            <person name="Miura K."/>
            <person name="Momose H."/>
        </authorList>
    </citation>
    <scope>PROTEIN SEQUENCE OF 1-33</scope>
</reference>
<comment type="function">
    <text>Strong inhibitory activity toward subtilisin BPN' and, to a lesser extent, toward trypsin.</text>
</comment>
<comment type="subunit">
    <text>Homodimer.</text>
</comment>
<comment type="subcellular location">
    <subcellularLocation>
        <location>Secreted</location>
    </subcellularLocation>
</comment>
<comment type="similarity">
    <text evidence="2">Belongs to the protease inhibitor I16 (SSI) family.</text>
</comment>
<name>SSI7_STRAM</name>
<keyword id="KW-0903">Direct protein sequencing</keyword>
<keyword id="KW-1015">Disulfide bond</keyword>
<keyword id="KW-0646">Protease inhibitor</keyword>
<keyword id="KW-0964">Secreted</keyword>
<keyword id="KW-0722">Serine protease inhibitor</keyword>
<sequence length="109" mass="11098">SLHAPSALVLTVGHGESAATAVPLRAVTLTCAPTASGTHPATVSACAELRGAGGDFDALAADAGVMCTREYAPVVVTVDGVWQGRRLSYERTFANECVKNAGSSSVFTF</sequence>
<proteinExistence type="evidence at protein level"/>
<feature type="chain" id="PRO_0000208655" description="Subtilisin inhibitor-like protein 7">
    <location>
        <begin position="1"/>
        <end position="109"/>
    </location>
</feature>
<feature type="site" description="Reactive bond" evidence="1">
    <location>
        <begin position="69"/>
        <end position="70"/>
    </location>
</feature>
<feature type="disulfide bond" evidence="1">
    <location>
        <begin position="31"/>
        <end position="46"/>
    </location>
</feature>
<feature type="disulfide bond" evidence="1">
    <location>
        <begin position="67"/>
        <end position="97"/>
    </location>
</feature>
<accession>Q9R642</accession>
<accession>Q9R5B5</accession>
<dbReference type="PIR" id="S65719">
    <property type="entry name" value="S65719"/>
</dbReference>
<dbReference type="SMR" id="Q9R642"/>
<dbReference type="MEROPS" id="I16.011"/>
<dbReference type="GO" id="GO:0005576">
    <property type="term" value="C:extracellular region"/>
    <property type="evidence" value="ECO:0007669"/>
    <property type="project" value="UniProtKB-SubCell"/>
</dbReference>
<dbReference type="GO" id="GO:0004867">
    <property type="term" value="F:serine-type endopeptidase inhibitor activity"/>
    <property type="evidence" value="ECO:0007669"/>
    <property type="project" value="UniProtKB-UniRule"/>
</dbReference>
<dbReference type="Gene3D" id="3.30.350.10">
    <property type="entry name" value="Subtilisin inhibitor-like"/>
    <property type="match status" value="1"/>
</dbReference>
<dbReference type="HAMAP" id="MF_00778">
    <property type="entry name" value="SSI"/>
    <property type="match status" value="1"/>
</dbReference>
<dbReference type="InterPro" id="IPR000691">
    <property type="entry name" value="Prot_inh_I16_SSI"/>
</dbReference>
<dbReference type="InterPro" id="IPR020054">
    <property type="entry name" value="Prot_inh_SSI_I16_CS"/>
</dbReference>
<dbReference type="InterPro" id="IPR023549">
    <property type="entry name" value="Subtilisin_inhibitor"/>
</dbReference>
<dbReference type="InterPro" id="IPR036819">
    <property type="entry name" value="Subtilisin_inhibitor-like_sf"/>
</dbReference>
<dbReference type="Pfam" id="PF00720">
    <property type="entry name" value="SSI"/>
    <property type="match status" value="1"/>
</dbReference>
<dbReference type="PRINTS" id="PR00294">
    <property type="entry name" value="SSBTLNINHBTR"/>
</dbReference>
<dbReference type="SUPFAM" id="SSF55399">
    <property type="entry name" value="Subtilisin inhibitor"/>
    <property type="match status" value="1"/>
</dbReference>
<dbReference type="PROSITE" id="PS00999">
    <property type="entry name" value="SSI"/>
    <property type="match status" value="1"/>
</dbReference>
<evidence type="ECO:0000250" key="1"/>
<evidence type="ECO:0000305" key="2"/>